<proteinExistence type="evidence at protein level"/>
<protein>
    <recommendedName>
        <fullName>Cytochrome c oxidase subunit 5B liver, mitochondrial</fullName>
    </recommendedName>
    <alternativeName>
        <fullName>Cytochrome c oxidase polypeptide Vb liver</fullName>
    </alternativeName>
</protein>
<feature type="chain" id="PRO_0000197031" description="Cytochrome c oxidase subunit 5B liver, mitochondrial">
    <location>
        <begin position="1"/>
        <end position="33" status="greater than"/>
    </location>
</feature>
<feature type="non-terminal residue">
    <location>
        <position position="33"/>
    </location>
</feature>
<keyword id="KW-0903">Direct protein sequencing</keyword>
<keyword id="KW-0472">Membrane</keyword>
<keyword id="KW-0496">Mitochondrion</keyword>
<keyword id="KW-0999">Mitochondrion inner membrane</keyword>
<accession>P80330</accession>
<sequence length="33" mass="3403">AVGGIPTDEEQATGLEEIVMVAAQXGADXYDVM</sequence>
<reference key="1">
    <citation type="journal article" date="1994" name="Eur. J. Biochem.">
        <title>Identification of tissue-specific isoforms for subunits Vb and VIIa of cytochrome c oxidase isolated from rainbow trout.</title>
        <authorList>
            <person name="Freund R."/>
            <person name="Kadenbach B."/>
        </authorList>
    </citation>
    <scope>PROTEIN SEQUENCE</scope>
    <source>
        <tissue>Liver</tissue>
    </source>
</reference>
<dbReference type="PIR" id="S43628">
    <property type="entry name" value="S43628"/>
</dbReference>
<dbReference type="UniPathway" id="UPA00705"/>
<dbReference type="Proteomes" id="UP000694395">
    <property type="component" value="Unplaced"/>
</dbReference>
<dbReference type="GO" id="GO:0005743">
    <property type="term" value="C:mitochondrial inner membrane"/>
    <property type="evidence" value="ECO:0007669"/>
    <property type="project" value="UniProtKB-SubCell"/>
</dbReference>
<dbReference type="GO" id="GO:0045277">
    <property type="term" value="C:respiratory chain complex IV"/>
    <property type="evidence" value="ECO:0007669"/>
    <property type="project" value="InterPro"/>
</dbReference>
<dbReference type="GO" id="GO:0006123">
    <property type="term" value="P:mitochondrial electron transport, cytochrome c to oxygen"/>
    <property type="evidence" value="ECO:0007669"/>
    <property type="project" value="InterPro"/>
</dbReference>
<dbReference type="Gene3D" id="2.60.11.10">
    <property type="entry name" value="Cytochrome c oxidase, subunit Vb"/>
    <property type="match status" value="1"/>
</dbReference>
<dbReference type="InterPro" id="IPR002124">
    <property type="entry name" value="Cyt_c_oxidase_su5b"/>
</dbReference>
<dbReference type="InterPro" id="IPR036972">
    <property type="entry name" value="Cyt_c_oxidase_su5b_sf"/>
</dbReference>
<dbReference type="Pfam" id="PF01215">
    <property type="entry name" value="COX5B"/>
    <property type="match status" value="1"/>
</dbReference>
<dbReference type="SUPFAM" id="SSF57802">
    <property type="entry name" value="Rubredoxin-like"/>
    <property type="match status" value="1"/>
</dbReference>
<comment type="function">
    <text evidence="2">Component of the cytochrome c oxidase, the last enzyme in the mitochondrial electron transport chain which drives oxidative phosphorylation. The respiratory chain contains 3 multisubunit complexes succinate dehydrogenase (complex II, CII), ubiquinol-cytochrome c oxidoreductase (cytochrome b-c1 complex, complex III, CIII) and cytochrome c oxidase (complex IV, CIV), that cooperate to transfer electrons derived from NADH and succinate to molecular oxygen, creating an electrochemical gradient over the inner membrane that drives transmembrane transport and the ATP synthase. Cytochrome c oxidase is the component of the respiratory chain that catalyzes the reduction of oxygen to water. Electrons originating from reduced cytochrome c in the intermembrane space (IMS) are transferred via the dinuclear copper A center (CU(A)) of subunit 2 and heme A of subunit 1 to the active site in subunit 1, a binuclear center (BNC) formed by heme A3 and copper B (CU(B)). The BNC reduces molecular oxygen to 2 water molecules using 4 electrons from cytochrome c in the IMS and 4 protons from the mitochondrial matrix.</text>
</comment>
<comment type="pathway">
    <text evidence="2">Energy metabolism; oxidative phosphorylation.</text>
</comment>
<comment type="subunit">
    <text evidence="1">Component of the cytochrome c oxidase (complex IV, CIV), a multisubunit enzyme composed of 14 subunits. The complex is composed of a catalytic core of 3 subunits MT-CO1, MT-CO2 and MT-CO3, encoded in the mitochondrial DNA, and 11 supernumerary subunits COX4I, COX5A, COX5B, COX6A, COX6B, COX6C, COX7A, COX7B, COX7C, COX8 and NDUFA4, which are encoded in the nuclear genome. The complex exists as a monomer or a dimer and forms supercomplexes (SCs) in the inner mitochondrial membrane with NADH-ubiquinone oxidoreductase (complex I, CI) and ubiquinol-cytochrome c oxidoreductase (cytochrome b-c1 complex, complex III, CIII), resulting in different assemblies (supercomplex SCI(1)III(2)IV(1) and megacomplex MCI(2)III(2)IV(2)).</text>
</comment>
<comment type="subcellular location">
    <subcellularLocation>
        <location evidence="1">Mitochondrion inner membrane</location>
        <topology evidence="1">Peripheral membrane protein</topology>
        <orientation evidence="1">Matrix side</orientation>
    </subcellularLocation>
</comment>
<comment type="similarity">
    <text evidence="3">Belongs to the cytochrome c oxidase subunit 5B family.</text>
</comment>
<name>CX5B2_ONCMY</name>
<organism>
    <name type="scientific">Oncorhynchus mykiss</name>
    <name type="common">Rainbow trout</name>
    <name type="synonym">Salmo gairdneri</name>
    <dbReference type="NCBI Taxonomy" id="8022"/>
    <lineage>
        <taxon>Eukaryota</taxon>
        <taxon>Metazoa</taxon>
        <taxon>Chordata</taxon>
        <taxon>Craniata</taxon>
        <taxon>Vertebrata</taxon>
        <taxon>Euteleostomi</taxon>
        <taxon>Actinopterygii</taxon>
        <taxon>Neopterygii</taxon>
        <taxon>Teleostei</taxon>
        <taxon>Protacanthopterygii</taxon>
        <taxon>Salmoniformes</taxon>
        <taxon>Salmonidae</taxon>
        <taxon>Salmoninae</taxon>
        <taxon>Oncorhynchus</taxon>
    </lineage>
</organism>
<evidence type="ECO:0000250" key="1">
    <source>
        <dbReference type="UniProtKB" id="P00428"/>
    </source>
</evidence>
<evidence type="ECO:0000250" key="2">
    <source>
        <dbReference type="UniProtKB" id="P04037"/>
    </source>
</evidence>
<evidence type="ECO:0000305" key="3"/>